<organism>
    <name type="scientific">Schizosaccharomyces pombe (strain 972 / ATCC 24843)</name>
    <name type="common">Fission yeast</name>
    <dbReference type="NCBI Taxonomy" id="284812"/>
    <lineage>
        <taxon>Eukaryota</taxon>
        <taxon>Fungi</taxon>
        <taxon>Dikarya</taxon>
        <taxon>Ascomycota</taxon>
        <taxon>Taphrinomycotina</taxon>
        <taxon>Schizosaccharomycetes</taxon>
        <taxon>Schizosaccharomycetales</taxon>
        <taxon>Schizosaccharomycetaceae</taxon>
        <taxon>Schizosaccharomyces</taxon>
    </lineage>
</organism>
<comment type="function">
    <text evidence="1">Required for cell viability in cells lacking mitochondrial DNA.</text>
</comment>
<comment type="subcellular location">
    <subcellularLocation>
        <location>Membrane</location>
        <topology>Multi-pass membrane protein</topology>
    </subcellularLocation>
</comment>
<comment type="similarity">
    <text evidence="3">Belongs to the MGR2 family.</text>
</comment>
<comment type="sequence caution" evidence="3">
    <conflict type="erroneous gene model prediction">
        <sequence resource="EMBL-CDS" id="AAN32721"/>
    </conflict>
</comment>
<comment type="sequence caution" evidence="3">
    <conflict type="erroneous gene model prediction">
        <sequence resource="EMBL-CDS" id="BAA12187"/>
    </conflict>
</comment>
<name>MGR2_SCHPO</name>
<protein>
    <recommendedName>
        <fullName>Protein mgr2</fullName>
    </recommendedName>
</protein>
<evidence type="ECO:0000250" key="1"/>
<evidence type="ECO:0000255" key="2"/>
<evidence type="ECO:0000305" key="3"/>
<accession>P79082</accession>
<accession>Q8J2M7</accession>
<feature type="chain" id="PRO_0000343158" description="Protein mgr2">
    <location>
        <begin position="1"/>
        <end position="120"/>
    </location>
</feature>
<feature type="topological domain" description="Cytoplasmic" evidence="2">
    <location>
        <begin position="1"/>
        <end position="15"/>
    </location>
</feature>
<feature type="transmembrane region" description="Helical" evidence="2">
    <location>
        <begin position="16"/>
        <end position="36"/>
    </location>
</feature>
<feature type="topological domain" description="Extracellular" evidence="2">
    <location>
        <begin position="37"/>
        <end position="49"/>
    </location>
</feature>
<feature type="transmembrane region" description="Helical" evidence="2">
    <location>
        <begin position="50"/>
        <end position="70"/>
    </location>
</feature>
<feature type="topological domain" description="Cytoplasmic" evidence="2">
    <location>
        <begin position="71"/>
        <end position="120"/>
    </location>
</feature>
<gene>
    <name type="primary">mgr2</name>
    <name type="ORF">SPBC27.06c</name>
</gene>
<reference key="1">
    <citation type="journal article" date="1997" name="DNA Res.">
        <title>Identification of open reading frames in Schizosaccharomyces pombe cDNAs.</title>
        <authorList>
            <person name="Yoshioka S."/>
            <person name="Kato K."/>
            <person name="Nakai K."/>
            <person name="Okayama H."/>
            <person name="Nojima H."/>
        </authorList>
    </citation>
    <scope>NUCLEOTIDE SEQUENCE [LARGE SCALE MRNA]</scope>
    <source>
        <strain>PR745</strain>
    </source>
</reference>
<reference key="2">
    <citation type="submission" date="2001-09" db="EMBL/GenBank/DDBJ databases">
        <title>Schizosaccharomyces pombe ATP sulfurylase.</title>
        <authorList>
            <person name="Simonics T."/>
            <person name="Maraz A."/>
            <person name="Balla E."/>
        </authorList>
    </citation>
    <scope>NUCLEOTIDE SEQUENCE [GENOMIC DNA]</scope>
    <source>
        <strain>caf1-21</strain>
    </source>
</reference>
<reference key="3">
    <citation type="submission" date="1996-03" db="EMBL/GenBank/DDBJ databases">
        <title>S.pombe chromosome II cosmid 1228 sequence.</title>
        <authorList>
            <person name="Kohnosu A."/>
            <person name="Niwa O."/>
            <person name="Yano M."/>
            <person name="Saitoh S."/>
            <person name="Katayama T."/>
            <person name="Nagao K."/>
            <person name="Yanagida M."/>
        </authorList>
    </citation>
    <scope>NUCLEOTIDE SEQUENCE [GENOMIC DNA]</scope>
    <source>
        <strain>972 / ATCC 24843</strain>
    </source>
</reference>
<reference key="4">
    <citation type="journal article" date="2002" name="Nature">
        <title>The genome sequence of Schizosaccharomyces pombe.</title>
        <authorList>
            <person name="Wood V."/>
            <person name="Gwilliam R."/>
            <person name="Rajandream M.A."/>
            <person name="Lyne M.H."/>
            <person name="Lyne R."/>
            <person name="Stewart A."/>
            <person name="Sgouros J.G."/>
            <person name="Peat N."/>
            <person name="Hayles J."/>
            <person name="Baker S.G."/>
            <person name="Basham D."/>
            <person name="Bowman S."/>
            <person name="Brooks K."/>
            <person name="Brown D."/>
            <person name="Brown S."/>
            <person name="Chillingworth T."/>
            <person name="Churcher C.M."/>
            <person name="Collins M."/>
            <person name="Connor R."/>
            <person name="Cronin A."/>
            <person name="Davis P."/>
            <person name="Feltwell T."/>
            <person name="Fraser A."/>
            <person name="Gentles S."/>
            <person name="Goble A."/>
            <person name="Hamlin N."/>
            <person name="Harris D.E."/>
            <person name="Hidalgo J."/>
            <person name="Hodgson G."/>
            <person name="Holroyd S."/>
            <person name="Hornsby T."/>
            <person name="Howarth S."/>
            <person name="Huckle E.J."/>
            <person name="Hunt S."/>
            <person name="Jagels K."/>
            <person name="James K.D."/>
            <person name="Jones L."/>
            <person name="Jones M."/>
            <person name="Leather S."/>
            <person name="McDonald S."/>
            <person name="McLean J."/>
            <person name="Mooney P."/>
            <person name="Moule S."/>
            <person name="Mungall K.L."/>
            <person name="Murphy L.D."/>
            <person name="Niblett D."/>
            <person name="Odell C."/>
            <person name="Oliver K."/>
            <person name="O'Neil S."/>
            <person name="Pearson D."/>
            <person name="Quail M.A."/>
            <person name="Rabbinowitsch E."/>
            <person name="Rutherford K.M."/>
            <person name="Rutter S."/>
            <person name="Saunders D."/>
            <person name="Seeger K."/>
            <person name="Sharp S."/>
            <person name="Skelton J."/>
            <person name="Simmonds M.N."/>
            <person name="Squares R."/>
            <person name="Squares S."/>
            <person name="Stevens K."/>
            <person name="Taylor K."/>
            <person name="Taylor R.G."/>
            <person name="Tivey A."/>
            <person name="Walsh S.V."/>
            <person name="Warren T."/>
            <person name="Whitehead S."/>
            <person name="Woodward J.R."/>
            <person name="Volckaert G."/>
            <person name="Aert R."/>
            <person name="Robben J."/>
            <person name="Grymonprez B."/>
            <person name="Weltjens I."/>
            <person name="Vanstreels E."/>
            <person name="Rieger M."/>
            <person name="Schaefer M."/>
            <person name="Mueller-Auer S."/>
            <person name="Gabel C."/>
            <person name="Fuchs M."/>
            <person name="Duesterhoeft A."/>
            <person name="Fritzc C."/>
            <person name="Holzer E."/>
            <person name="Moestl D."/>
            <person name="Hilbert H."/>
            <person name="Borzym K."/>
            <person name="Langer I."/>
            <person name="Beck A."/>
            <person name="Lehrach H."/>
            <person name="Reinhardt R."/>
            <person name="Pohl T.M."/>
            <person name="Eger P."/>
            <person name="Zimmermann W."/>
            <person name="Wedler H."/>
            <person name="Wambutt R."/>
            <person name="Purnelle B."/>
            <person name="Goffeau A."/>
            <person name="Cadieu E."/>
            <person name="Dreano S."/>
            <person name="Gloux S."/>
            <person name="Lelaure V."/>
            <person name="Mottier S."/>
            <person name="Galibert F."/>
            <person name="Aves S.J."/>
            <person name="Xiang Z."/>
            <person name="Hunt C."/>
            <person name="Moore K."/>
            <person name="Hurst S.M."/>
            <person name="Lucas M."/>
            <person name="Rochet M."/>
            <person name="Gaillardin C."/>
            <person name="Tallada V.A."/>
            <person name="Garzon A."/>
            <person name="Thode G."/>
            <person name="Daga R.R."/>
            <person name="Cruzado L."/>
            <person name="Jimenez J."/>
            <person name="Sanchez M."/>
            <person name="del Rey F."/>
            <person name="Benito J."/>
            <person name="Dominguez A."/>
            <person name="Revuelta J.L."/>
            <person name="Moreno S."/>
            <person name="Armstrong J."/>
            <person name="Forsburg S.L."/>
            <person name="Cerutti L."/>
            <person name="Lowe T."/>
            <person name="McCombie W.R."/>
            <person name="Paulsen I."/>
            <person name="Potashkin J."/>
            <person name="Shpakovski G.V."/>
            <person name="Ussery D."/>
            <person name="Barrell B.G."/>
            <person name="Nurse P."/>
        </authorList>
    </citation>
    <scope>NUCLEOTIDE SEQUENCE [LARGE SCALE GENOMIC DNA]</scope>
    <source>
        <strain>972 / ATCC 24843</strain>
    </source>
</reference>
<sequence>MQSMQPSTVDKLKMGAIMGSAAGLGIGFLFGGVAVLRYGPGPRGFLRTLGQYMLTSAATFGFFMSIGSVIRNEDIPLIQQSGSHWNQRLLNENANSSRIFALAMQQAKSSPRKSNEVAEC</sequence>
<keyword id="KW-0472">Membrane</keyword>
<keyword id="KW-1185">Reference proteome</keyword>
<keyword id="KW-0812">Transmembrane</keyword>
<keyword id="KW-1133">Transmembrane helix</keyword>
<dbReference type="EMBL" id="D89182">
    <property type="protein sequence ID" value="BAA13844.1"/>
    <property type="molecule type" value="mRNA"/>
</dbReference>
<dbReference type="EMBL" id="AF421374">
    <property type="protein sequence ID" value="AAN32721.1"/>
    <property type="status" value="ALT_SEQ"/>
    <property type="molecule type" value="Genomic_DNA"/>
</dbReference>
<dbReference type="EMBL" id="D83992">
    <property type="protein sequence ID" value="BAA12187.1"/>
    <property type="status" value="ALT_SEQ"/>
    <property type="molecule type" value="Genomic_DNA"/>
</dbReference>
<dbReference type="EMBL" id="CU329671">
    <property type="protein sequence ID" value="CAB89006.1"/>
    <property type="molecule type" value="Genomic_DNA"/>
</dbReference>
<dbReference type="PIR" id="T42736">
    <property type="entry name" value="T42736"/>
</dbReference>
<dbReference type="RefSeq" id="NP_595661.1">
    <property type="nucleotide sequence ID" value="NM_001021555.2"/>
</dbReference>
<dbReference type="BioGRID" id="276953">
    <property type="interactions" value="105"/>
</dbReference>
<dbReference type="FunCoup" id="P79082">
    <property type="interactions" value="106"/>
</dbReference>
<dbReference type="STRING" id="284812.P79082"/>
<dbReference type="iPTMnet" id="P79082"/>
<dbReference type="PaxDb" id="4896-SPBC27.06c.1"/>
<dbReference type="EnsemblFungi" id="SPBC27.06c.1">
    <property type="protein sequence ID" value="SPBC27.06c.1:pep"/>
    <property type="gene ID" value="SPBC27.06c"/>
</dbReference>
<dbReference type="GeneID" id="2540425"/>
<dbReference type="KEGG" id="spo:2540425"/>
<dbReference type="PomBase" id="SPBC27.06c">
    <property type="gene designation" value="mgr2"/>
</dbReference>
<dbReference type="VEuPathDB" id="FungiDB:SPBC27.06c"/>
<dbReference type="eggNOG" id="KOG4096">
    <property type="taxonomic scope" value="Eukaryota"/>
</dbReference>
<dbReference type="HOGENOM" id="CLU_142435_1_1_1"/>
<dbReference type="InParanoid" id="P79082"/>
<dbReference type="PhylomeDB" id="P79082"/>
<dbReference type="PRO" id="PR:P79082"/>
<dbReference type="Proteomes" id="UP000002485">
    <property type="component" value="Chromosome II"/>
</dbReference>
<dbReference type="GO" id="GO:0005737">
    <property type="term" value="C:cytoplasm"/>
    <property type="evidence" value="ECO:0007005"/>
    <property type="project" value="PomBase"/>
</dbReference>
<dbReference type="GO" id="GO:0005744">
    <property type="term" value="C:TIM23 mitochondrial import inner membrane translocase complex"/>
    <property type="evidence" value="ECO:0000318"/>
    <property type="project" value="GO_Central"/>
</dbReference>
<dbReference type="GO" id="GO:0030150">
    <property type="term" value="P:protein import into mitochondrial matrix"/>
    <property type="evidence" value="ECO:0000266"/>
    <property type="project" value="PomBase"/>
</dbReference>
<dbReference type="GO" id="GO:0045039">
    <property type="term" value="P:protein insertion into mitochondrial inner membrane"/>
    <property type="evidence" value="ECO:0000318"/>
    <property type="project" value="GO_Central"/>
</dbReference>
<dbReference type="InterPro" id="IPR018450">
    <property type="entry name" value="Romo1/Mgr2"/>
</dbReference>
<dbReference type="PANTHER" id="PTHR28525">
    <property type="entry name" value="REACTIVE OXYGEN SPECIES MODULATOR 1"/>
    <property type="match status" value="1"/>
</dbReference>
<dbReference type="PANTHER" id="PTHR28525:SF1">
    <property type="entry name" value="REACTIVE OXYGEN SPECIES MODULATOR 1"/>
    <property type="match status" value="1"/>
</dbReference>
<dbReference type="Pfam" id="PF10247">
    <property type="entry name" value="Romo1"/>
    <property type="match status" value="1"/>
</dbReference>
<dbReference type="SMART" id="SM01378">
    <property type="entry name" value="Romo1"/>
    <property type="match status" value="1"/>
</dbReference>
<proteinExistence type="evidence at transcript level"/>